<proteinExistence type="inferred from homology"/>
<keyword id="KW-0106">Calcium</keyword>
<keyword id="KW-0963">Cytoplasm</keyword>
<keyword id="KW-0378">Hydrolase</keyword>
<keyword id="KW-0479">Metal-binding</keyword>
<keyword id="KW-1185">Reference proteome</keyword>
<comment type="function">
    <text evidence="1">Exhibits lactonase activity. Acts in cells with perturbed membrane integrity and is possibly related to the membrane homeostasis (By similarity).</text>
</comment>
<comment type="cofactor">
    <cofactor evidence="1">
        <name>Ca(2+)</name>
        <dbReference type="ChEBI" id="CHEBI:29108"/>
    </cofactor>
    <text evidence="1">Binds 2 Ca(2+) ions per subunit.</text>
</comment>
<comment type="subcellular location">
    <subcellularLocation>
        <location evidence="1">Cytoplasm</location>
    </subcellularLocation>
</comment>
<comment type="similarity">
    <text evidence="3">Belongs to the SMP-30/CGR1 family.</text>
</comment>
<dbReference type="EC" id="3.1.1.-"/>
<dbReference type="EMBL" id="CP000029">
    <property type="protein sequence ID" value="AAW53218.1"/>
    <property type="molecule type" value="Genomic_DNA"/>
</dbReference>
<dbReference type="RefSeq" id="WP_002470290.1">
    <property type="nucleotide sequence ID" value="NC_002976.3"/>
</dbReference>
<dbReference type="SMR" id="Q5HKM9"/>
<dbReference type="STRING" id="176279.SERP2315"/>
<dbReference type="KEGG" id="ser:SERP2315"/>
<dbReference type="eggNOG" id="COG3386">
    <property type="taxonomic scope" value="Bacteria"/>
</dbReference>
<dbReference type="HOGENOM" id="CLU_036110_2_0_9"/>
<dbReference type="Proteomes" id="UP000000531">
    <property type="component" value="Chromosome"/>
</dbReference>
<dbReference type="GO" id="GO:0005737">
    <property type="term" value="C:cytoplasm"/>
    <property type="evidence" value="ECO:0007669"/>
    <property type="project" value="UniProtKB-SubCell"/>
</dbReference>
<dbReference type="GO" id="GO:0016787">
    <property type="term" value="F:hydrolase activity"/>
    <property type="evidence" value="ECO:0007669"/>
    <property type="project" value="UniProtKB-KW"/>
</dbReference>
<dbReference type="GO" id="GO:0046872">
    <property type="term" value="F:metal ion binding"/>
    <property type="evidence" value="ECO:0007669"/>
    <property type="project" value="UniProtKB-KW"/>
</dbReference>
<dbReference type="Gene3D" id="2.120.10.30">
    <property type="entry name" value="TolB, C-terminal domain"/>
    <property type="match status" value="1"/>
</dbReference>
<dbReference type="InterPro" id="IPR011042">
    <property type="entry name" value="6-blade_b-propeller_TolB-like"/>
</dbReference>
<dbReference type="InterPro" id="IPR013658">
    <property type="entry name" value="SGL"/>
</dbReference>
<dbReference type="InterPro" id="IPR051262">
    <property type="entry name" value="SMP-30/CGR1_Lactonase"/>
</dbReference>
<dbReference type="PANTHER" id="PTHR47572:SF4">
    <property type="entry name" value="LACTONASE DRP35"/>
    <property type="match status" value="1"/>
</dbReference>
<dbReference type="PANTHER" id="PTHR47572">
    <property type="entry name" value="LIPOPROTEIN-RELATED"/>
    <property type="match status" value="1"/>
</dbReference>
<dbReference type="Pfam" id="PF08450">
    <property type="entry name" value="SGL"/>
    <property type="match status" value="1"/>
</dbReference>
<dbReference type="SUPFAM" id="SSF63829">
    <property type="entry name" value="Calcium-dependent phosphotriesterase"/>
    <property type="match status" value="1"/>
</dbReference>
<accession>Q5HKM9</accession>
<feature type="chain" id="PRO_0000259755" description="Lactonase drp35">
    <location>
        <begin position="1"/>
        <end position="325"/>
    </location>
</feature>
<feature type="active site" description="Proton donor" evidence="2">
    <location>
        <position position="234"/>
    </location>
</feature>
<feature type="binding site" evidence="1">
    <location>
        <position position="46"/>
    </location>
    <ligand>
        <name>Ca(2+)</name>
        <dbReference type="ChEBI" id="CHEBI:29108"/>
        <label>1</label>
        <note>catalytic</note>
    </ligand>
</feature>
<feature type="binding site" evidence="1">
    <location>
        <position position="108"/>
    </location>
    <ligand>
        <name>Ca(2+)</name>
        <dbReference type="ChEBI" id="CHEBI:29108"/>
        <label>2</label>
    </ligand>
</feature>
<feature type="binding site" evidence="1">
    <location>
        <position position="110"/>
    </location>
    <ligand>
        <name>Ca(2+)</name>
        <dbReference type="ChEBI" id="CHEBI:29108"/>
        <label>2</label>
    </ligand>
</feature>
<feature type="binding site" evidence="1">
    <location>
        <position position="128"/>
    </location>
    <ligand>
        <name>Ca(2+)</name>
        <dbReference type="ChEBI" id="CHEBI:29108"/>
        <label>2</label>
    </ligand>
</feature>
<feature type="binding site" evidence="1">
    <location>
        <position position="131"/>
    </location>
    <ligand>
        <name>Ca(2+)</name>
        <dbReference type="ChEBI" id="CHEBI:29108"/>
        <label>2</label>
    </ligand>
</feature>
<feature type="binding site" evidence="1">
    <location>
        <position position="133"/>
    </location>
    <ligand>
        <name>Ca(2+)</name>
        <dbReference type="ChEBI" id="CHEBI:29108"/>
        <label>2</label>
    </ligand>
</feature>
<feature type="binding site" evidence="1">
    <location>
        <position position="136"/>
    </location>
    <ligand>
        <name>Ca(2+)</name>
        <dbReference type="ChEBI" id="CHEBI:29108"/>
        <label>1</label>
        <note>catalytic</note>
    </ligand>
</feature>
<feature type="binding site" evidence="1">
    <location>
        <position position="183"/>
    </location>
    <ligand>
        <name>Ca(2+)</name>
        <dbReference type="ChEBI" id="CHEBI:29108"/>
        <label>1</label>
        <note>catalytic</note>
    </ligand>
</feature>
<feature type="binding site" evidence="1">
    <location>
        <position position="234"/>
    </location>
    <ligand>
        <name>Ca(2+)</name>
        <dbReference type="ChEBI" id="CHEBI:29108"/>
        <label>1</label>
        <note>catalytic</note>
    </ligand>
</feature>
<feature type="binding site" evidence="1">
    <location>
        <position position="235"/>
    </location>
    <ligand>
        <name>Ca(2+)</name>
        <dbReference type="ChEBI" id="CHEBI:29108"/>
        <label>1</label>
        <note>catalytic</note>
    </ligand>
</feature>
<organism>
    <name type="scientific">Staphylococcus epidermidis (strain ATCC 35984 / DSM 28319 / BCRC 17069 / CCUG 31568 / BM 3577 / RP62A)</name>
    <dbReference type="NCBI Taxonomy" id="176279"/>
    <lineage>
        <taxon>Bacteria</taxon>
        <taxon>Bacillati</taxon>
        <taxon>Bacillota</taxon>
        <taxon>Bacilli</taxon>
        <taxon>Bacillales</taxon>
        <taxon>Staphylococcaceae</taxon>
        <taxon>Staphylococcus</taxon>
    </lineage>
</organism>
<protein>
    <recommendedName>
        <fullName>Lactonase drp35</fullName>
        <ecNumber>3.1.1.-</ecNumber>
    </recommendedName>
</protein>
<evidence type="ECO:0000250" key="1"/>
<evidence type="ECO:0000255" key="2"/>
<evidence type="ECO:0000305" key="3"/>
<name>DRP35_STAEQ</name>
<sequence length="325" mass="36143">MANQKLPTLKYTGKSESAVPIVSESELQTVTAEPWVKISDKGLQLEGLNFNREGQLFLLDVFEGNIFKVNPATKEVTTKFQSVKDNPAAIKVHKDGRLFICYLGDFKTTGGIFATTEKGEQIEEIISDLNTEYCIDDMVFDSKGGFYFTDFRGYSTQPLGGVYYVDPDFKTVTPIIQNISVANGIALSTDEKVLWVTETTTNRLHRIALEDDGVTIAPFGATIPYYFTGHEGPDSCCIDSNDNLYVAMYGQGRVLVFNKRGYPIGQILMPGRDDGKMLRTTHPQFIPGTNQLIICTNDIENHSEGGSMLYTVNGFAKGYESYQFQ</sequence>
<gene>
    <name type="primary">drp35</name>
    <name type="ordered locus">SERP2315</name>
</gene>
<reference key="1">
    <citation type="journal article" date="2005" name="J. Bacteriol.">
        <title>Insights on evolution of virulence and resistance from the complete genome analysis of an early methicillin-resistant Staphylococcus aureus strain and a biofilm-producing methicillin-resistant Staphylococcus epidermidis strain.</title>
        <authorList>
            <person name="Gill S.R."/>
            <person name="Fouts D.E."/>
            <person name="Archer G.L."/>
            <person name="Mongodin E.F."/>
            <person name="DeBoy R.T."/>
            <person name="Ravel J."/>
            <person name="Paulsen I.T."/>
            <person name="Kolonay J.F."/>
            <person name="Brinkac L.M."/>
            <person name="Beanan M.J."/>
            <person name="Dodson R.J."/>
            <person name="Daugherty S.C."/>
            <person name="Madupu R."/>
            <person name="Angiuoli S.V."/>
            <person name="Durkin A.S."/>
            <person name="Haft D.H."/>
            <person name="Vamathevan J.J."/>
            <person name="Khouri H."/>
            <person name="Utterback T.R."/>
            <person name="Lee C."/>
            <person name="Dimitrov G."/>
            <person name="Jiang L."/>
            <person name="Qin H."/>
            <person name="Weidman J."/>
            <person name="Tran K."/>
            <person name="Kang K.H."/>
            <person name="Hance I.R."/>
            <person name="Nelson K.E."/>
            <person name="Fraser C.M."/>
        </authorList>
    </citation>
    <scope>NUCLEOTIDE SEQUENCE [LARGE SCALE GENOMIC DNA]</scope>
    <source>
        <strain>ATCC 35984 / DSM 28319 / BCRC 17069 / CCUG 31568 / BM 3577 / RP62A</strain>
    </source>
</reference>